<proteinExistence type="inferred from homology"/>
<dbReference type="EMBL" id="CP000034">
    <property type="protein sequence ID" value="ABB61837.1"/>
    <property type="molecule type" value="Genomic_DNA"/>
</dbReference>
<dbReference type="RefSeq" id="WP_000457334.1">
    <property type="nucleotide sequence ID" value="NC_007606.1"/>
</dbReference>
<dbReference type="RefSeq" id="YP_403328.1">
    <property type="nucleotide sequence ID" value="NC_007606.1"/>
</dbReference>
<dbReference type="SMR" id="Q32FR8"/>
<dbReference type="STRING" id="300267.SDY_1717"/>
<dbReference type="EnsemblBacteria" id="ABB61837">
    <property type="protein sequence ID" value="ABB61837"/>
    <property type="gene ID" value="SDY_1717"/>
</dbReference>
<dbReference type="KEGG" id="sdy:SDY_1717"/>
<dbReference type="PATRIC" id="fig|300267.13.peg.2071"/>
<dbReference type="HOGENOM" id="CLU_185263_0_0_6"/>
<dbReference type="Proteomes" id="UP000002716">
    <property type="component" value="Chromosome"/>
</dbReference>
<dbReference type="HAMAP" id="MF_00507">
    <property type="entry name" value="UPF0181"/>
    <property type="match status" value="1"/>
</dbReference>
<dbReference type="InterPro" id="IPR005371">
    <property type="entry name" value="UPF0181"/>
</dbReference>
<dbReference type="NCBIfam" id="NF003476">
    <property type="entry name" value="PRK05114.1"/>
    <property type="match status" value="1"/>
</dbReference>
<dbReference type="Pfam" id="PF03701">
    <property type="entry name" value="UPF0181"/>
    <property type="match status" value="1"/>
</dbReference>
<reference key="1">
    <citation type="journal article" date="2005" name="Nucleic Acids Res.">
        <title>Genome dynamics and diversity of Shigella species, the etiologic agents of bacillary dysentery.</title>
        <authorList>
            <person name="Yang F."/>
            <person name="Yang J."/>
            <person name="Zhang X."/>
            <person name="Chen L."/>
            <person name="Jiang Y."/>
            <person name="Yan Y."/>
            <person name="Tang X."/>
            <person name="Wang J."/>
            <person name="Xiong Z."/>
            <person name="Dong J."/>
            <person name="Xue Y."/>
            <person name="Zhu Y."/>
            <person name="Xu X."/>
            <person name="Sun L."/>
            <person name="Chen S."/>
            <person name="Nie H."/>
            <person name="Peng J."/>
            <person name="Xu J."/>
            <person name="Wang Y."/>
            <person name="Yuan Z."/>
            <person name="Wen Y."/>
            <person name="Yao Z."/>
            <person name="Shen Y."/>
            <person name="Qiang B."/>
            <person name="Hou Y."/>
            <person name="Yu J."/>
            <person name="Jin Q."/>
        </authorList>
    </citation>
    <scope>NUCLEOTIDE SEQUENCE [LARGE SCALE GENOMIC DNA]</scope>
    <source>
        <strain>Sd197</strain>
    </source>
</reference>
<comment type="similarity">
    <text evidence="1">Belongs to the UPF0181 family.</text>
</comment>
<accession>Q32FR8</accession>
<sequence>MFAGLPSLTHEQQQKAVERIQELMAQGMSSGQAIALVAEELRANHSGERIVARFEDEDE</sequence>
<evidence type="ECO:0000255" key="1">
    <source>
        <dbReference type="HAMAP-Rule" id="MF_00507"/>
    </source>
</evidence>
<feature type="chain" id="PRO_0000236634" description="UPF0181 protein YoaH">
    <location>
        <begin position="1"/>
        <end position="59"/>
    </location>
</feature>
<organism>
    <name type="scientific">Shigella dysenteriae serotype 1 (strain Sd197)</name>
    <dbReference type="NCBI Taxonomy" id="300267"/>
    <lineage>
        <taxon>Bacteria</taxon>
        <taxon>Pseudomonadati</taxon>
        <taxon>Pseudomonadota</taxon>
        <taxon>Gammaproteobacteria</taxon>
        <taxon>Enterobacterales</taxon>
        <taxon>Enterobacteriaceae</taxon>
        <taxon>Shigella</taxon>
    </lineage>
</organism>
<gene>
    <name evidence="1" type="primary">yoaH</name>
    <name type="ordered locus">SDY_1717</name>
</gene>
<name>YOAH_SHIDS</name>
<protein>
    <recommendedName>
        <fullName evidence="1">UPF0181 protein YoaH</fullName>
    </recommendedName>
</protein>
<keyword id="KW-1185">Reference proteome</keyword>